<keyword id="KW-0165">Cleavage on pair of basic residues</keyword>
<keyword id="KW-1015">Disulfide bond</keyword>
<keyword id="KW-0325">Glycoprotein</keyword>
<keyword id="KW-0378">Hydrolase</keyword>
<keyword id="KW-0645">Protease</keyword>
<keyword id="KW-1185">Reference proteome</keyword>
<keyword id="KW-0964">Secreted</keyword>
<keyword id="KW-0720">Serine protease</keyword>
<keyword id="KW-0732">Signal</keyword>
<keyword id="KW-0865">Zymogen</keyword>
<reference evidence="18" key="1">
    <citation type="journal article" date="1999" name="J. Neurosci.">
        <title>A role for amontillado, the Drosophila homolog of the neuropeptide precursor processing protease PC2, in triggering hatching behavior.</title>
        <authorList>
            <person name="Siekhaus D.E."/>
            <person name="Fuller R.S."/>
        </authorList>
    </citation>
    <scope>NUCLEOTIDE SEQUENCE [MRNA]</scope>
    <scope>FUNCTION</scope>
    <scope>TISSUE SPECIFICITY</scope>
    <scope>DEVELOPMENTAL STAGE</scope>
</reference>
<reference evidence="21" key="2">
    <citation type="journal article" date="2000" name="Science">
        <title>The genome sequence of Drosophila melanogaster.</title>
        <authorList>
            <person name="Adams M.D."/>
            <person name="Celniker S.E."/>
            <person name="Holt R.A."/>
            <person name="Evans C.A."/>
            <person name="Gocayne J.D."/>
            <person name="Amanatides P.G."/>
            <person name="Scherer S.E."/>
            <person name="Li P.W."/>
            <person name="Hoskins R.A."/>
            <person name="Galle R.F."/>
            <person name="George R.A."/>
            <person name="Lewis S.E."/>
            <person name="Richards S."/>
            <person name="Ashburner M."/>
            <person name="Henderson S.N."/>
            <person name="Sutton G.G."/>
            <person name="Wortman J.R."/>
            <person name="Yandell M.D."/>
            <person name="Zhang Q."/>
            <person name="Chen L.X."/>
            <person name="Brandon R.C."/>
            <person name="Rogers Y.-H.C."/>
            <person name="Blazej R.G."/>
            <person name="Champe M."/>
            <person name="Pfeiffer B.D."/>
            <person name="Wan K.H."/>
            <person name="Doyle C."/>
            <person name="Baxter E.G."/>
            <person name="Helt G."/>
            <person name="Nelson C.R."/>
            <person name="Miklos G.L.G."/>
            <person name="Abril J.F."/>
            <person name="Agbayani A."/>
            <person name="An H.-J."/>
            <person name="Andrews-Pfannkoch C."/>
            <person name="Baldwin D."/>
            <person name="Ballew R.M."/>
            <person name="Basu A."/>
            <person name="Baxendale J."/>
            <person name="Bayraktaroglu L."/>
            <person name="Beasley E.M."/>
            <person name="Beeson K.Y."/>
            <person name="Benos P.V."/>
            <person name="Berman B.P."/>
            <person name="Bhandari D."/>
            <person name="Bolshakov S."/>
            <person name="Borkova D."/>
            <person name="Botchan M.R."/>
            <person name="Bouck J."/>
            <person name="Brokstein P."/>
            <person name="Brottier P."/>
            <person name="Burtis K.C."/>
            <person name="Busam D.A."/>
            <person name="Butler H."/>
            <person name="Cadieu E."/>
            <person name="Center A."/>
            <person name="Chandra I."/>
            <person name="Cherry J.M."/>
            <person name="Cawley S."/>
            <person name="Dahlke C."/>
            <person name="Davenport L.B."/>
            <person name="Davies P."/>
            <person name="de Pablos B."/>
            <person name="Delcher A."/>
            <person name="Deng Z."/>
            <person name="Mays A.D."/>
            <person name="Dew I."/>
            <person name="Dietz S.M."/>
            <person name="Dodson K."/>
            <person name="Doup L.E."/>
            <person name="Downes M."/>
            <person name="Dugan-Rocha S."/>
            <person name="Dunkov B.C."/>
            <person name="Dunn P."/>
            <person name="Durbin K.J."/>
            <person name="Evangelista C.C."/>
            <person name="Ferraz C."/>
            <person name="Ferriera S."/>
            <person name="Fleischmann W."/>
            <person name="Fosler C."/>
            <person name="Gabrielian A.E."/>
            <person name="Garg N.S."/>
            <person name="Gelbart W.M."/>
            <person name="Glasser K."/>
            <person name="Glodek A."/>
            <person name="Gong F."/>
            <person name="Gorrell J.H."/>
            <person name="Gu Z."/>
            <person name="Guan P."/>
            <person name="Harris M."/>
            <person name="Harris N.L."/>
            <person name="Harvey D.A."/>
            <person name="Heiman T.J."/>
            <person name="Hernandez J.R."/>
            <person name="Houck J."/>
            <person name="Hostin D."/>
            <person name="Houston K.A."/>
            <person name="Howland T.J."/>
            <person name="Wei M.-H."/>
            <person name="Ibegwam C."/>
            <person name="Jalali M."/>
            <person name="Kalush F."/>
            <person name="Karpen G.H."/>
            <person name="Ke Z."/>
            <person name="Kennison J.A."/>
            <person name="Ketchum K.A."/>
            <person name="Kimmel B.E."/>
            <person name="Kodira C.D."/>
            <person name="Kraft C.L."/>
            <person name="Kravitz S."/>
            <person name="Kulp D."/>
            <person name="Lai Z."/>
            <person name="Lasko P."/>
            <person name="Lei Y."/>
            <person name="Levitsky A.A."/>
            <person name="Li J.H."/>
            <person name="Li Z."/>
            <person name="Liang Y."/>
            <person name="Lin X."/>
            <person name="Liu X."/>
            <person name="Mattei B."/>
            <person name="McIntosh T.C."/>
            <person name="McLeod M.P."/>
            <person name="McPherson D."/>
            <person name="Merkulov G."/>
            <person name="Milshina N.V."/>
            <person name="Mobarry C."/>
            <person name="Morris J."/>
            <person name="Moshrefi A."/>
            <person name="Mount S.M."/>
            <person name="Moy M."/>
            <person name="Murphy B."/>
            <person name="Murphy L."/>
            <person name="Muzny D.M."/>
            <person name="Nelson D.L."/>
            <person name="Nelson D.R."/>
            <person name="Nelson K.A."/>
            <person name="Nixon K."/>
            <person name="Nusskern D.R."/>
            <person name="Pacleb J.M."/>
            <person name="Palazzolo M."/>
            <person name="Pittman G.S."/>
            <person name="Pan S."/>
            <person name="Pollard J."/>
            <person name="Puri V."/>
            <person name="Reese M.G."/>
            <person name="Reinert K."/>
            <person name="Remington K."/>
            <person name="Saunders R.D.C."/>
            <person name="Scheeler F."/>
            <person name="Shen H."/>
            <person name="Shue B.C."/>
            <person name="Siden-Kiamos I."/>
            <person name="Simpson M."/>
            <person name="Skupski M.P."/>
            <person name="Smith T.J."/>
            <person name="Spier E."/>
            <person name="Spradling A.C."/>
            <person name="Stapleton M."/>
            <person name="Strong R."/>
            <person name="Sun E."/>
            <person name="Svirskas R."/>
            <person name="Tector C."/>
            <person name="Turner R."/>
            <person name="Venter E."/>
            <person name="Wang A.H."/>
            <person name="Wang X."/>
            <person name="Wang Z.-Y."/>
            <person name="Wassarman D.A."/>
            <person name="Weinstock G.M."/>
            <person name="Weissenbach J."/>
            <person name="Williams S.M."/>
            <person name="Woodage T."/>
            <person name="Worley K.C."/>
            <person name="Wu D."/>
            <person name="Yang S."/>
            <person name="Yao Q.A."/>
            <person name="Ye J."/>
            <person name="Yeh R.-F."/>
            <person name="Zaveri J.S."/>
            <person name="Zhan M."/>
            <person name="Zhang G."/>
            <person name="Zhao Q."/>
            <person name="Zheng L."/>
            <person name="Zheng X.H."/>
            <person name="Zhong F.N."/>
            <person name="Zhong W."/>
            <person name="Zhou X."/>
            <person name="Zhu S.C."/>
            <person name="Zhu X."/>
            <person name="Smith H.O."/>
            <person name="Gibbs R.A."/>
            <person name="Myers E.W."/>
            <person name="Rubin G.M."/>
            <person name="Venter J.C."/>
        </authorList>
    </citation>
    <scope>NUCLEOTIDE SEQUENCE [LARGE SCALE GENOMIC DNA]</scope>
    <source>
        <strain evidence="21">Berkeley</strain>
    </source>
</reference>
<reference evidence="21" key="3">
    <citation type="journal article" date="2002" name="Genome Biol.">
        <title>Annotation of the Drosophila melanogaster euchromatic genome: a systematic review.</title>
        <authorList>
            <person name="Misra S."/>
            <person name="Crosby M.A."/>
            <person name="Mungall C.J."/>
            <person name="Matthews B.B."/>
            <person name="Campbell K.S."/>
            <person name="Hradecky P."/>
            <person name="Huang Y."/>
            <person name="Kaminker J.S."/>
            <person name="Millburn G.H."/>
            <person name="Prochnik S.E."/>
            <person name="Smith C.D."/>
            <person name="Tupy J.L."/>
            <person name="Whitfield E.J."/>
            <person name="Bayraktaroglu L."/>
            <person name="Berman B.P."/>
            <person name="Bettencourt B.R."/>
            <person name="Celniker S.E."/>
            <person name="de Grey A.D.N.J."/>
            <person name="Drysdale R.A."/>
            <person name="Harris N.L."/>
            <person name="Richter J."/>
            <person name="Russo S."/>
            <person name="Schroeder A.J."/>
            <person name="Shu S.Q."/>
            <person name="Stapleton M."/>
            <person name="Yamada C."/>
            <person name="Ashburner M."/>
            <person name="Gelbart W.M."/>
            <person name="Rubin G.M."/>
            <person name="Lewis S.E."/>
        </authorList>
    </citation>
    <scope>GENOME REANNOTATION</scope>
    <source>
        <strain evidence="21">Berkeley</strain>
    </source>
</reference>
<reference evidence="19" key="4">
    <citation type="journal article" date="2002" name="Genome Biol.">
        <title>A Drosophila full-length cDNA resource.</title>
        <authorList>
            <person name="Stapleton M."/>
            <person name="Carlson J.W."/>
            <person name="Brokstein P."/>
            <person name="Yu C."/>
            <person name="Champe M."/>
            <person name="George R.A."/>
            <person name="Guarin H."/>
            <person name="Kronmiller B."/>
            <person name="Pacleb J.M."/>
            <person name="Park S."/>
            <person name="Wan K.H."/>
            <person name="Rubin G.M."/>
            <person name="Celniker S.E."/>
        </authorList>
    </citation>
    <scope>NUCLEOTIDE SEQUENCE [LARGE SCALE MRNA]</scope>
    <source>
        <strain evidence="19">Berkeley</strain>
        <tissue evidence="19">Head</tissue>
    </source>
</reference>
<reference evidence="17" key="5">
    <citation type="journal article" date="2000" name="J. Biol. Chem.">
        <title>Interaction of Drosophila melanogaster prohormone convertase 2 and 7B2. Insect cell-specific processing and secretion.</title>
        <authorList>
            <person name="Hwang J.R."/>
            <person name="Siekhaus D.E."/>
            <person name="Fuller R.S."/>
            <person name="Taghert P.H."/>
            <person name="Lindberg I."/>
        </authorList>
    </citation>
    <scope>FUNCTION</scope>
    <scope>CATALYTIC ACTIVITY</scope>
    <scope>SUBCELLULAR LOCATION</scope>
    <scope>TISSUE SPECIFICITY</scope>
    <scope>DEVELOPMENTAL STAGE</scope>
</reference>
<reference evidence="17" key="6">
    <citation type="journal article" date="2003" name="Genetics">
        <title>amontillado, the Drosophila homolog of the prohormone processing protease PC2, is required during embryogenesis and early larval development.</title>
        <authorList>
            <person name="Rayburn L.Y."/>
            <person name="Gooding H.C."/>
            <person name="Choksi S.P."/>
            <person name="Maloney D."/>
            <person name="Kidd A.R. III"/>
            <person name="Siekhaus D.E."/>
            <person name="Bender M."/>
        </authorList>
    </citation>
    <scope>FUNCTION</scope>
    <scope>MUTAGENESIS OF CYS-241; CYS-254; GLY-367; GLY-473 AND SER-557</scope>
</reference>
<reference evidence="17" key="7">
    <citation type="journal article" date="2009" name="Dev. Biol.">
        <title>The proprotein convertase amontillado (amon) is required during Drosophila pupal development.</title>
        <authorList>
            <person name="Rayburn L.Y."/>
            <person name="Rhea J."/>
            <person name="Jocoy S.R."/>
            <person name="Bender M."/>
        </authorList>
    </citation>
    <scope>FUNCTION</scope>
    <scope>TISSUE SPECIFICITY</scope>
    <scope>DEVELOPMENTAL STAGE</scope>
</reference>
<reference evidence="17" key="8">
    <citation type="journal article" date="2010" name="PLoS Genet.">
        <title>The proprotein convertase encoded by amontillado (amon) is required in Drosophila corpora cardiaca endocrine cells producing the glucose regulatory hormone AKH.</title>
        <authorList>
            <person name="Rhea J.M."/>
            <person name="Wegener C."/>
            <person name="Bender M."/>
        </authorList>
    </citation>
    <scope>FUNCTION</scope>
    <scope>TISSUE SPECIFICITY</scope>
    <scope>DISRUPTION PHENOTYPE</scope>
    <scope>MUTAGENESIS OF CYS-241</scope>
</reference>
<reference evidence="17" key="9">
    <citation type="journal article" date="2011" name="J. Neurochem.">
        <title>Deficiency of prohormone convertase dPC2 (AMONTILLADO) results in impaired production of bioactive neuropeptide hormones in Drosophila.</title>
        <authorList>
            <person name="Wegener C."/>
            <person name="Herbert H."/>
            <person name="Kahnt J."/>
            <person name="Bender M."/>
            <person name="Rhea J.M."/>
        </authorList>
    </citation>
    <scope>FUNCTION</scope>
    <scope>TISSUE SPECIFICITY</scope>
</reference>
<reference evidence="17" key="10">
    <citation type="journal article" date="2016" name="Biol. Open">
        <title>Amontillado is required for Drosophila Slit processing and for tendon-mediated muscle patterning.</title>
        <authorList>
            <person name="Ordan E."/>
            <person name="Volk T."/>
        </authorList>
    </citation>
    <scope>FUNCTION</scope>
    <scope>DISRUPTION PHENOTYPE</scope>
</reference>
<reference evidence="17" key="11">
    <citation type="journal article" date="2017" name="Elife">
        <title>Parallel Activin and BMP signaling coordinates R7/R8 photoreceptor subtype pairing in the stochastic Drosophila retina.</title>
        <authorList>
            <person name="Wells B.S."/>
            <person name="Pistillo D."/>
            <person name="Barnhart E."/>
            <person name="Desplan C."/>
        </authorList>
    </citation>
    <scope>FUNCTION</scope>
    <scope>TISSUE SPECIFICITY</scope>
    <scope>DISRUPTION PHENOTYPE</scope>
</reference>
<reference evidence="17" key="12">
    <citation type="journal article" date="2020" name="Development">
        <title>Proteolytic cleavage of Slit by the Tolkin protease converts an axon repulsion cue to an axon growth cue in vivo.</title>
        <authorList>
            <person name="Kellermeyer R."/>
            <person name="Heydman L.M."/>
            <person name="Gillis T."/>
            <person name="Mastick G.S."/>
            <person name="Song M."/>
            <person name="Kidd T."/>
        </authorList>
    </citation>
    <scope>FUNCTION</scope>
    <scope>MUTAGENESIS OF CYS-241</scope>
</reference>
<proteinExistence type="evidence at protein level"/>
<comment type="function">
    <text evidence="6 7 8 9 10 11 12 13 14">Serine endopeptidase which is involved in the processing of hormone and other protein precursors at sites comprised of pairs of basic amino acid residues (PubMed:10749852, PubMed:20523747, PubMed:21138435). Required during embryonic and larval development, probably by proteolytically processing peptide hormones involved in hatching, larval growth and larval molting (PubMed:12586710). Required for the processing and activation of Akh which maintains normal hemolymph sugar levels (PubMed:20523747). Has been shown in one study to be required for processing of sli into slit N-product and slit C-product in the embryo which is necessary for lateral transverse muscle elongation but has been shown in another study not to be required for sli cleavage (PubMed:27628033, PubMed:32994163). Required for larval hatching (PubMed:10436051). Also required for normal larval wandering behavior which occurs prior to pupariation (PubMed:21138435). Required during pupal development for head eversion, leg and wing disk extension, and abdominal differentiation (PubMed:19559693). Required during eye development for R8 photoreceptor cell specification by regulating processing of ligands required for the BMP and activin signaling pathways (PubMed:28853393).</text>
</comment>
<comment type="catalytic activity">
    <reaction evidence="7">
        <text>Release of protein hormones and neuropeptides from their precursors, generally by hydrolysis of -Lys-Arg-|- bonds.</text>
        <dbReference type="EC" id="3.4.21.94"/>
    </reaction>
</comment>
<comment type="subcellular location">
    <subcellularLocation>
        <location evidence="7">Secreted</location>
    </subcellularLocation>
</comment>
<comment type="tissue specificity">
    <text evidence="6 7 9 10 11 13">Expressed in the central nervous system (CNS) and midgut endocrine cells of third instar larva (at protein level) (PubMed:19559693). In the CNS, expressed in the CA-LP1 and CA-LP2 neurons which innervate the corpus allatum, and in the CC-MS2 neurons which innervate the corpora cardiaca of the ring gland (PubMed:19559693, PubMed:21138435). Also expressed in the CC-MS1, SP3, Tv and Va neurons (PubMed:21138435). Expressed in Akh-producing cells of the corpora cardiaca (PubMed:20523747). In the embryo, restricted to the final stages of embryogenesis where expression is found in anterior sensory structures and in only 168 cells in the brain and ventral nerve cord (PubMed:10436051). After larvae hatch, the sensory structures and most cells in the CNS turn off or substantially reduce expression (PubMed:10436051). In third instar larva, expressed at higher levels in the anterior section than in the posterior section (PubMed:10749852). Little expression is detected in the adult head (PubMed:10749852). In the developing eye, expressed at higher levels in pale-type R7 photoreceptor cells than in yellow-type R7 cells although expression is not seen in all pale-type R7 cells (PubMed:28853393). Also expressed in outer photoreceptor cells (PubMed:28853393).</text>
</comment>
<comment type="developmental stage">
    <text evidence="6 7 9">Detected during embryogenesis, larval development, and pupal development (at protein level) (PubMed:10749852, PubMed:19559693). Also expressed in the adult (PubMed:10749852). In the embryo, first observed at 12-16 hours and peaks at the end of embryogenesis (PubMed:10436051). Levels drop in the first larval stage and reach a very low level by the second larval stage which continues throughout the remainder of larval and most of pupal life (PubMed:10436051). Expression increases in late pupae and peaks once again in adults (PubMed:10436051).</text>
</comment>
<comment type="disruption phenotype">
    <text evidence="10 12 13">RNAi-mediated knockdown in Akh-producing cells of the corpora cardiaca results in a significant decrease in combined glucose and trehalose levels (PubMed:20523747). RNAi-mediated knockdown results in defective muscle patterning (PubMed:27628033). RNAi-mediated knockdown results in a reduction in the pale ommatidia subtype (PubMed:28853393).</text>
</comment>
<comment type="similarity">
    <text evidence="17">Belongs to the peptidase S8 family. Furin subfamily.</text>
</comment>
<comment type="caution">
    <text evidence="12">Has been shown in one study to be required for processing of sli into slit N-product and slit C-product (PubMed:27628033). However, has been shown in another study not to be required for sli cleavage with the protease required for sli cleavage being identified as tok (PubMed:27628033).</text>
</comment>
<name>NEC2_DROME</name>
<organism evidence="21">
    <name type="scientific">Drosophila melanogaster</name>
    <name type="common">Fruit fly</name>
    <dbReference type="NCBI Taxonomy" id="7227"/>
    <lineage>
        <taxon>Eukaryota</taxon>
        <taxon>Metazoa</taxon>
        <taxon>Ecdysozoa</taxon>
        <taxon>Arthropoda</taxon>
        <taxon>Hexapoda</taxon>
        <taxon>Insecta</taxon>
        <taxon>Pterygota</taxon>
        <taxon>Neoptera</taxon>
        <taxon>Endopterygota</taxon>
        <taxon>Diptera</taxon>
        <taxon>Brachycera</taxon>
        <taxon>Muscomorpha</taxon>
        <taxon>Ephydroidea</taxon>
        <taxon>Drosophilidae</taxon>
        <taxon>Drosophila</taxon>
        <taxon>Sophophora</taxon>
    </lineage>
</organism>
<dbReference type="EC" id="3.4.21.94" evidence="7"/>
<dbReference type="EMBL" id="AF033117">
    <property type="protein sequence ID" value="AAD49105.1"/>
    <property type="molecule type" value="mRNA"/>
</dbReference>
<dbReference type="EMBL" id="AE014297">
    <property type="protein sequence ID" value="AAF56615.1"/>
    <property type="molecule type" value="Genomic_DNA"/>
</dbReference>
<dbReference type="EMBL" id="AY119509">
    <property type="protein sequence ID" value="AAM50163.1"/>
    <property type="molecule type" value="mRNA"/>
</dbReference>
<dbReference type="RefSeq" id="NP_477318.1">
    <property type="nucleotide sequence ID" value="NM_057970.4"/>
</dbReference>
<dbReference type="SMR" id="Q9VBC7"/>
<dbReference type="FunCoup" id="Q9VBC7">
    <property type="interactions" value="108"/>
</dbReference>
<dbReference type="STRING" id="7227.FBpp0084420"/>
<dbReference type="GlyGen" id="Q9VBC7">
    <property type="glycosylation" value="5 sites"/>
</dbReference>
<dbReference type="PaxDb" id="7227-FBpp0084420"/>
<dbReference type="DNASU" id="43215"/>
<dbReference type="EnsemblMetazoa" id="FBtr0085048">
    <property type="protein sequence ID" value="FBpp0084420"/>
    <property type="gene ID" value="FBgn0023179"/>
</dbReference>
<dbReference type="GeneID" id="43215"/>
<dbReference type="KEGG" id="dme:Dmel_CG6438"/>
<dbReference type="UCSC" id="CG6438-RA">
    <property type="organism name" value="d. melanogaster"/>
</dbReference>
<dbReference type="AGR" id="FB:FBgn0023179"/>
<dbReference type="CTD" id="43215"/>
<dbReference type="FlyBase" id="FBgn0023179">
    <property type="gene designation" value="amon"/>
</dbReference>
<dbReference type="VEuPathDB" id="VectorBase:FBgn0023179"/>
<dbReference type="eggNOG" id="KOG3526">
    <property type="taxonomic scope" value="Eukaryota"/>
</dbReference>
<dbReference type="GeneTree" id="ENSGT00940000156965"/>
<dbReference type="HOGENOM" id="CLU_002976_4_4_1"/>
<dbReference type="InParanoid" id="Q9VBC7"/>
<dbReference type="OMA" id="LAKQWHS"/>
<dbReference type="OrthoDB" id="300641at2759"/>
<dbReference type="BioGRID-ORCS" id="43215">
    <property type="hits" value="0 hits in 3 CRISPR screens"/>
</dbReference>
<dbReference type="GenomeRNAi" id="43215"/>
<dbReference type="PRO" id="PR:Q9VBC7"/>
<dbReference type="Proteomes" id="UP000000803">
    <property type="component" value="Chromosome 3R"/>
</dbReference>
<dbReference type="Bgee" id="FBgn0023179">
    <property type="expression patterns" value="Expressed in adult anterior midgut class I enteroendocrine cell in adult midgut (Drosophila) and 174 other cell types or tissues"/>
</dbReference>
<dbReference type="ExpressionAtlas" id="Q9VBC7">
    <property type="expression patterns" value="baseline and differential"/>
</dbReference>
<dbReference type="GO" id="GO:0005576">
    <property type="term" value="C:extracellular region"/>
    <property type="evidence" value="ECO:0000314"/>
    <property type="project" value="FlyBase"/>
</dbReference>
<dbReference type="GO" id="GO:0005615">
    <property type="term" value="C:extracellular space"/>
    <property type="evidence" value="ECO:0000318"/>
    <property type="project" value="GO_Central"/>
</dbReference>
<dbReference type="GO" id="GO:0016020">
    <property type="term" value="C:membrane"/>
    <property type="evidence" value="ECO:0000318"/>
    <property type="project" value="GO_Central"/>
</dbReference>
<dbReference type="GO" id="GO:0043005">
    <property type="term" value="C:neuron projection"/>
    <property type="evidence" value="ECO:0000318"/>
    <property type="project" value="GO_Central"/>
</dbReference>
<dbReference type="GO" id="GO:0008233">
    <property type="term" value="F:peptidase activity"/>
    <property type="evidence" value="ECO:0000314"/>
    <property type="project" value="FlyBase"/>
</dbReference>
<dbReference type="GO" id="GO:0017171">
    <property type="term" value="F:serine hydrolase activity"/>
    <property type="evidence" value="ECO:0007005"/>
    <property type="project" value="FlyBase"/>
</dbReference>
<dbReference type="GO" id="GO:0004252">
    <property type="term" value="F:serine-type endopeptidase activity"/>
    <property type="evidence" value="ECO:0000318"/>
    <property type="project" value="GO_Central"/>
</dbReference>
<dbReference type="GO" id="GO:0033500">
    <property type="term" value="P:carbohydrate homeostasis"/>
    <property type="evidence" value="ECO:0000315"/>
    <property type="project" value="FlyBase"/>
</dbReference>
<dbReference type="GO" id="GO:0035187">
    <property type="term" value="P:hatching behavior"/>
    <property type="evidence" value="ECO:0000315"/>
    <property type="project" value="FlyBase"/>
</dbReference>
<dbReference type="GO" id="GO:0002165">
    <property type="term" value="P:instar larval or pupal development"/>
    <property type="evidence" value="ECO:0000315"/>
    <property type="project" value="FlyBase"/>
</dbReference>
<dbReference type="GO" id="GO:0035180">
    <property type="term" value="P:larval wandering behavior"/>
    <property type="evidence" value="ECO:0000315"/>
    <property type="project" value="FlyBase"/>
</dbReference>
<dbReference type="GO" id="GO:0016486">
    <property type="term" value="P:peptide hormone processing"/>
    <property type="evidence" value="ECO:0000315"/>
    <property type="project" value="FlyBase"/>
</dbReference>
<dbReference type="GO" id="GO:0006508">
    <property type="term" value="P:proteolysis"/>
    <property type="evidence" value="ECO:0000314"/>
    <property type="project" value="FlyBase"/>
</dbReference>
<dbReference type="GO" id="GO:0045464">
    <property type="term" value="P:R8 cell fate specification"/>
    <property type="evidence" value="ECO:0000315"/>
    <property type="project" value="FlyBase"/>
</dbReference>
<dbReference type="CDD" id="cd04059">
    <property type="entry name" value="Peptidases_S8_Protein_convertases_Kexins_Furin-like"/>
    <property type="match status" value="1"/>
</dbReference>
<dbReference type="FunFam" id="3.30.70.850:FF:000005">
    <property type="entry name" value="Neuroendocrine convertase"/>
    <property type="match status" value="1"/>
</dbReference>
<dbReference type="FunFam" id="2.60.120.260:FF:000020">
    <property type="entry name" value="neuroendocrine convertase 2"/>
    <property type="match status" value="1"/>
</dbReference>
<dbReference type="FunFam" id="3.40.50.200:FF:000004">
    <property type="entry name" value="Proprotein convertase type 2"/>
    <property type="match status" value="1"/>
</dbReference>
<dbReference type="Gene3D" id="2.60.120.260">
    <property type="entry name" value="Galactose-binding domain-like"/>
    <property type="match status" value="1"/>
</dbReference>
<dbReference type="Gene3D" id="3.30.70.850">
    <property type="entry name" value="Peptidase S8, pro-domain"/>
    <property type="match status" value="1"/>
</dbReference>
<dbReference type="Gene3D" id="3.40.50.200">
    <property type="entry name" value="Peptidase S8/S53 domain"/>
    <property type="match status" value="1"/>
</dbReference>
<dbReference type="InterPro" id="IPR008979">
    <property type="entry name" value="Galactose-bd-like_sf"/>
</dbReference>
<dbReference type="InterPro" id="IPR034182">
    <property type="entry name" value="Kexin/furin"/>
</dbReference>
<dbReference type="InterPro" id="IPR002884">
    <property type="entry name" value="P_dom"/>
</dbReference>
<dbReference type="InterPro" id="IPR000209">
    <property type="entry name" value="Peptidase_S8/S53_dom"/>
</dbReference>
<dbReference type="InterPro" id="IPR036852">
    <property type="entry name" value="Peptidase_S8/S53_dom_sf"/>
</dbReference>
<dbReference type="InterPro" id="IPR023827">
    <property type="entry name" value="Peptidase_S8_Asp-AS"/>
</dbReference>
<dbReference type="InterPro" id="IPR022398">
    <property type="entry name" value="Peptidase_S8_His-AS"/>
</dbReference>
<dbReference type="InterPro" id="IPR023828">
    <property type="entry name" value="Peptidase_S8_Ser-AS"/>
</dbReference>
<dbReference type="InterPro" id="IPR015500">
    <property type="entry name" value="Peptidase_S8_subtilisin-rel"/>
</dbReference>
<dbReference type="InterPro" id="IPR032815">
    <property type="entry name" value="S8_pro-domain"/>
</dbReference>
<dbReference type="InterPro" id="IPR038466">
    <property type="entry name" value="S8_pro-domain_sf"/>
</dbReference>
<dbReference type="PANTHER" id="PTHR42884:SF13">
    <property type="entry name" value="NEUROENDOCRINE CONVERTASE 2"/>
    <property type="match status" value="1"/>
</dbReference>
<dbReference type="PANTHER" id="PTHR42884">
    <property type="entry name" value="PROPROTEIN CONVERTASE SUBTILISIN/KEXIN-RELATED"/>
    <property type="match status" value="1"/>
</dbReference>
<dbReference type="Pfam" id="PF01483">
    <property type="entry name" value="P_proprotein"/>
    <property type="match status" value="1"/>
</dbReference>
<dbReference type="Pfam" id="PF00082">
    <property type="entry name" value="Peptidase_S8"/>
    <property type="match status" value="1"/>
</dbReference>
<dbReference type="Pfam" id="PF16470">
    <property type="entry name" value="S8_pro-domain"/>
    <property type="match status" value="1"/>
</dbReference>
<dbReference type="PRINTS" id="PR00723">
    <property type="entry name" value="SUBTILISIN"/>
</dbReference>
<dbReference type="SUPFAM" id="SSF49785">
    <property type="entry name" value="Galactose-binding domain-like"/>
    <property type="match status" value="1"/>
</dbReference>
<dbReference type="SUPFAM" id="SSF54897">
    <property type="entry name" value="Protease propeptides/inhibitors"/>
    <property type="match status" value="1"/>
</dbReference>
<dbReference type="SUPFAM" id="SSF52743">
    <property type="entry name" value="Subtilisin-like"/>
    <property type="match status" value="1"/>
</dbReference>
<dbReference type="PROSITE" id="PS51829">
    <property type="entry name" value="P_HOMO_B"/>
    <property type="match status" value="1"/>
</dbReference>
<dbReference type="PROSITE" id="PS51892">
    <property type="entry name" value="SUBTILASE"/>
    <property type="match status" value="1"/>
</dbReference>
<dbReference type="PROSITE" id="PS00136">
    <property type="entry name" value="SUBTILASE_ASP"/>
    <property type="match status" value="1"/>
</dbReference>
<dbReference type="PROSITE" id="PS00137">
    <property type="entry name" value="SUBTILASE_HIS"/>
    <property type="match status" value="1"/>
</dbReference>
<dbReference type="PROSITE" id="PS00138">
    <property type="entry name" value="SUBTILASE_SER"/>
    <property type="match status" value="1"/>
</dbReference>
<sequence length="654" mass="71733">MAAATWSWLLAPFLLLHWASAGAGGGAGGSGAGLSGPAVFTSSFLVRFRRGVDNSFAHDVADKYGFDNLGPLVGADGHEYHFKHRTLPHARSRRSLTHTRALKSHPAVHTAVQQPGFKRVKRGLRPAVPAIHGMKFDLKVGEGNRIDEEPTDPYFPMQWYLKNTGQNGGKVRLDLNVQAAWAQGITGKNVTTAIMDDGVDYMHPDLKFNYNAEASYDFSSNDPFPYPRYTDDWFNSHGTRCAGEVAAARDNGICGVGVAYDSKIAGIRMLDQPYMTDLIEANSMGHEPHKIHIYSASWGPTDDGKTVDGPRNATMRAIVQGVNEGRNGLGNIYVWASGDGGEEDDCNCDGYAASMWTISINSAINDGQNAHYDESCSSTLASTFSNGAKDPNTGVATTDLYGKCTTTHSGTSAAAPEAAGVFALALEANPQLTWRDIQHLTVLTSKRNSLFDAKNRFHWTMNGVGLEFNHLFGFGVLDAGAMVTLSKQWHSVPPRYHCEAGELTQPQAIVMGRSLFWEIKTDACKGTDTEVNYLEHVQAVISANASRRGDLELFLTSPMGTKSMILSRRANDDDHRDGFTKWPFMTTHSWGEYPQGTWKLEARFNSPQTRHGNLLEWSLVLHGTKEAPYRTLHPSSPHSKLAIVKKAHEDKKMK</sequence>
<gene>
    <name evidence="15 20" type="primary">amon</name>
    <name evidence="20" type="ORF">CG6438</name>
</gene>
<accession>Q9VBC7</accession>
<accession>Q9UAE7</accession>
<protein>
    <recommendedName>
        <fullName evidence="17">Neuroendocrine convertase 2</fullName>
        <shortName evidence="17">NEC 2</shortName>
        <ecNumber evidence="7">3.4.21.94</ecNumber>
    </recommendedName>
    <alternativeName>
        <fullName evidence="15">DMH #5</fullName>
    </alternativeName>
    <alternativeName>
        <fullName evidence="16">Prohormone convertase 2</fullName>
        <shortName evidence="16">dPC2</shortName>
    </alternativeName>
    <alternativeName>
        <fullName evidence="15">Protein amontillado</fullName>
    </alternativeName>
</protein>
<evidence type="ECO:0000250" key="1">
    <source>
        <dbReference type="UniProtKB" id="P23188"/>
    </source>
</evidence>
<evidence type="ECO:0000255" key="2"/>
<evidence type="ECO:0000255" key="3">
    <source>
        <dbReference type="PROSITE-ProRule" id="PRU00498"/>
    </source>
</evidence>
<evidence type="ECO:0000255" key="4">
    <source>
        <dbReference type="PROSITE-ProRule" id="PRU01173"/>
    </source>
</evidence>
<evidence type="ECO:0000255" key="5">
    <source>
        <dbReference type="PROSITE-ProRule" id="PRU01240"/>
    </source>
</evidence>
<evidence type="ECO:0000269" key="6">
    <source>
    </source>
</evidence>
<evidence type="ECO:0000269" key="7">
    <source>
    </source>
</evidence>
<evidence type="ECO:0000269" key="8">
    <source>
    </source>
</evidence>
<evidence type="ECO:0000269" key="9">
    <source>
    </source>
</evidence>
<evidence type="ECO:0000269" key="10">
    <source>
    </source>
</evidence>
<evidence type="ECO:0000269" key="11">
    <source>
    </source>
</evidence>
<evidence type="ECO:0000269" key="12">
    <source>
    </source>
</evidence>
<evidence type="ECO:0000269" key="13">
    <source>
    </source>
</evidence>
<evidence type="ECO:0000269" key="14">
    <source>
    </source>
</evidence>
<evidence type="ECO:0000303" key="15">
    <source>
    </source>
</evidence>
<evidence type="ECO:0000303" key="16">
    <source>
    </source>
</evidence>
<evidence type="ECO:0000305" key="17"/>
<evidence type="ECO:0000312" key="18">
    <source>
        <dbReference type="EMBL" id="AAD49105.1"/>
    </source>
</evidence>
<evidence type="ECO:0000312" key="19">
    <source>
        <dbReference type="EMBL" id="AAM50163.1"/>
    </source>
</evidence>
<evidence type="ECO:0000312" key="20">
    <source>
        <dbReference type="FlyBase" id="FBgn0023179"/>
    </source>
</evidence>
<evidence type="ECO:0000312" key="21">
    <source>
        <dbReference type="Proteomes" id="UP000000803"/>
    </source>
</evidence>
<feature type="signal peptide" evidence="2">
    <location>
        <begin position="1"/>
        <end position="21"/>
    </location>
</feature>
<feature type="propeptide" id="PRO_0000457577" evidence="17">
    <location>
        <begin position="22"/>
        <end position="121"/>
    </location>
</feature>
<feature type="chain" id="PRO_5015100141" description="Neuroendocrine convertase 2" evidence="2">
    <location>
        <begin position="122"/>
        <end position="654"/>
    </location>
</feature>
<feature type="domain" description="Peptidase S8" evidence="5">
    <location>
        <begin position="158"/>
        <end position="483"/>
    </location>
</feature>
<feature type="domain" description="P/Homo B" evidence="4">
    <location>
        <begin position="491"/>
        <end position="627"/>
    </location>
</feature>
<feature type="active site" description="Charge relay system" evidence="5">
    <location>
        <position position="196"/>
    </location>
</feature>
<feature type="active site" description="Charge relay system" evidence="5">
    <location>
        <position position="237"/>
    </location>
</feature>
<feature type="active site" description="Charge relay system" evidence="5">
    <location>
        <position position="412"/>
    </location>
</feature>
<feature type="glycosylation site" description="N-linked (GlcNAc...) asparagine" evidence="3">
    <location>
        <position position="189"/>
    </location>
</feature>
<feature type="glycosylation site" description="N-linked (GlcNAc...) asparagine" evidence="3">
    <location>
        <position position="312"/>
    </location>
</feature>
<feature type="glycosylation site" description="N-linked (GlcNAc...) asparagine" evidence="3">
    <location>
        <position position="544"/>
    </location>
</feature>
<feature type="disulfide bond" evidence="1">
    <location>
        <begin position="254"/>
        <end position="404"/>
    </location>
</feature>
<feature type="disulfide bond" evidence="1">
    <location>
        <begin position="346"/>
        <end position="376"/>
    </location>
</feature>
<feature type="disulfide bond" evidence="1">
    <location>
        <begin position="498"/>
        <end position="524"/>
    </location>
</feature>
<feature type="mutagenesis site" description="In amonC241Y: Partial embryonic lethality and defective larval growth with no pupariation or survival to adulthood. Defective Akh processing. Does not affect sli processing." evidence="8 10 14">
    <original>C</original>
    <variation>Y</variation>
    <location>
        <position position="241"/>
    </location>
</feature>
<feature type="mutagenesis site" description="In amonC254Y: Partial embryonic lethality and defective larval growth with no pupariation or survival to adulthood." evidence="8">
    <original>C</original>
    <variation>Y</variation>
    <location>
        <position position="254"/>
    </location>
</feature>
<feature type="mutagenesis site" description="In amonG367V: Partial embryonic lethality and defective larval growth with no pupariation or survival to adulthood." evidence="8">
    <original>G</original>
    <variation>V</variation>
    <location>
        <position position="367"/>
    </location>
</feature>
<feature type="mutagenesis site" description="In amonG473R: Partial embryonic lethality and defective larval growth with no pupariation or survival to adulthood." evidence="8">
    <original>G</original>
    <variation>R</variation>
    <location>
        <position position="473"/>
    </location>
</feature>
<feature type="mutagenesis site" description="In amonS557L1 and amonS557L2: Partial embryonic lethality and defective larval growth with no pupariation or survival to adulthood." evidence="8">
    <original>S</original>
    <variation>L</variation>
    <location>
        <position position="557"/>
    </location>
</feature>
<feature type="sequence conflict" description="In Ref. 1; AAD49105." evidence="17" ref="1">
    <original>K</original>
    <variation>Q</variation>
    <location>
        <position position="562"/>
    </location>
</feature>